<evidence type="ECO:0000255" key="1">
    <source>
        <dbReference type="HAMAP-Rule" id="MF_00480"/>
    </source>
</evidence>
<evidence type="ECO:0000305" key="2"/>
<protein>
    <recommendedName>
        <fullName evidence="1">Small ribosomal subunit protein uS7</fullName>
    </recommendedName>
    <alternativeName>
        <fullName evidence="2">30S ribosomal protein S7</fullName>
    </alternativeName>
</protein>
<keyword id="KW-0687">Ribonucleoprotein</keyword>
<keyword id="KW-0689">Ribosomal protein</keyword>
<keyword id="KW-0694">RNA-binding</keyword>
<keyword id="KW-0699">rRNA-binding</keyword>
<keyword id="KW-0820">tRNA-binding</keyword>
<gene>
    <name evidence="1" type="primary">rpsG</name>
    <name type="ordered locus">Pcryo_2186</name>
</gene>
<organism>
    <name type="scientific">Psychrobacter cryohalolentis (strain ATCC BAA-1226 / DSM 17306 / VKM B-2378 / K5)</name>
    <dbReference type="NCBI Taxonomy" id="335284"/>
    <lineage>
        <taxon>Bacteria</taxon>
        <taxon>Pseudomonadati</taxon>
        <taxon>Pseudomonadota</taxon>
        <taxon>Gammaproteobacteria</taxon>
        <taxon>Moraxellales</taxon>
        <taxon>Moraxellaceae</taxon>
        <taxon>Psychrobacter</taxon>
    </lineage>
</organism>
<accession>Q1Q8P0</accession>
<feature type="chain" id="PRO_0000241768" description="Small ribosomal subunit protein uS7">
    <location>
        <begin position="1"/>
        <end position="157"/>
    </location>
</feature>
<reference key="1">
    <citation type="submission" date="2006-03" db="EMBL/GenBank/DDBJ databases">
        <title>Complete sequence of chromosome of Psychrobacter cryohalolentis K5.</title>
        <authorList>
            <consortium name="US DOE Joint Genome Institute"/>
            <person name="Copeland A."/>
            <person name="Lucas S."/>
            <person name="Lapidus A."/>
            <person name="Barry K."/>
            <person name="Detter J.C."/>
            <person name="Glavina T."/>
            <person name="Hammon N."/>
            <person name="Israni S."/>
            <person name="Dalin E."/>
            <person name="Tice H."/>
            <person name="Pitluck S."/>
            <person name="Brettin T."/>
            <person name="Bruce D."/>
            <person name="Han C."/>
            <person name="Tapia R."/>
            <person name="Sims D.R."/>
            <person name="Gilna P."/>
            <person name="Schmutz J."/>
            <person name="Larimer F."/>
            <person name="Land M."/>
            <person name="Hauser L."/>
            <person name="Kyrpides N."/>
            <person name="Kim E."/>
            <person name="Richardson P."/>
        </authorList>
    </citation>
    <scope>NUCLEOTIDE SEQUENCE [LARGE SCALE GENOMIC DNA]</scope>
    <source>
        <strain>ATCC BAA-1226 / DSM 17306 / VKM B-2378 / K5</strain>
    </source>
</reference>
<name>RS7_PSYCK</name>
<sequence>MPRRRVVATREILPDPKFGSQTVAKFINHVMSHGKKSTAERIVYGALETVSQKRNIEDPVSFFEEVLENVRPMVEVKARRVGGATYQVPMEVRPSRRTALAMRWLAEAAAKRSEKSMALRLAGELNDAADGKGNAMKKRDEVHRMADANKAFSHYRF</sequence>
<comment type="function">
    <text evidence="1">One of the primary rRNA binding proteins, it binds directly to 16S rRNA where it nucleates assembly of the head domain of the 30S subunit. Is located at the subunit interface close to the decoding center, probably blocks exit of the E-site tRNA.</text>
</comment>
<comment type="subunit">
    <text evidence="1">Part of the 30S ribosomal subunit. Contacts proteins S9 and S11.</text>
</comment>
<comment type="similarity">
    <text evidence="1">Belongs to the universal ribosomal protein uS7 family.</text>
</comment>
<dbReference type="EMBL" id="CP000323">
    <property type="protein sequence ID" value="ABE75963.1"/>
    <property type="molecule type" value="Genomic_DNA"/>
</dbReference>
<dbReference type="RefSeq" id="WP_011514497.1">
    <property type="nucleotide sequence ID" value="NC_007969.1"/>
</dbReference>
<dbReference type="SMR" id="Q1Q8P0"/>
<dbReference type="STRING" id="335284.Pcryo_2186"/>
<dbReference type="KEGG" id="pcr:Pcryo_2186"/>
<dbReference type="eggNOG" id="COG0049">
    <property type="taxonomic scope" value="Bacteria"/>
</dbReference>
<dbReference type="HOGENOM" id="CLU_072226_1_1_6"/>
<dbReference type="Proteomes" id="UP000002425">
    <property type="component" value="Chromosome"/>
</dbReference>
<dbReference type="GO" id="GO:0015935">
    <property type="term" value="C:small ribosomal subunit"/>
    <property type="evidence" value="ECO:0007669"/>
    <property type="project" value="InterPro"/>
</dbReference>
<dbReference type="GO" id="GO:0019843">
    <property type="term" value="F:rRNA binding"/>
    <property type="evidence" value="ECO:0007669"/>
    <property type="project" value="UniProtKB-UniRule"/>
</dbReference>
<dbReference type="GO" id="GO:0003735">
    <property type="term" value="F:structural constituent of ribosome"/>
    <property type="evidence" value="ECO:0007669"/>
    <property type="project" value="InterPro"/>
</dbReference>
<dbReference type="GO" id="GO:0000049">
    <property type="term" value="F:tRNA binding"/>
    <property type="evidence" value="ECO:0007669"/>
    <property type="project" value="UniProtKB-UniRule"/>
</dbReference>
<dbReference type="GO" id="GO:0006412">
    <property type="term" value="P:translation"/>
    <property type="evidence" value="ECO:0007669"/>
    <property type="project" value="UniProtKB-UniRule"/>
</dbReference>
<dbReference type="CDD" id="cd14869">
    <property type="entry name" value="uS7_Bacteria"/>
    <property type="match status" value="1"/>
</dbReference>
<dbReference type="FunFam" id="1.10.455.10:FF:000001">
    <property type="entry name" value="30S ribosomal protein S7"/>
    <property type="match status" value="1"/>
</dbReference>
<dbReference type="Gene3D" id="1.10.455.10">
    <property type="entry name" value="Ribosomal protein S7 domain"/>
    <property type="match status" value="1"/>
</dbReference>
<dbReference type="HAMAP" id="MF_00480_B">
    <property type="entry name" value="Ribosomal_uS7_B"/>
    <property type="match status" value="1"/>
</dbReference>
<dbReference type="InterPro" id="IPR000235">
    <property type="entry name" value="Ribosomal_uS7"/>
</dbReference>
<dbReference type="InterPro" id="IPR005717">
    <property type="entry name" value="Ribosomal_uS7_bac/org-type"/>
</dbReference>
<dbReference type="InterPro" id="IPR020606">
    <property type="entry name" value="Ribosomal_uS7_CS"/>
</dbReference>
<dbReference type="InterPro" id="IPR023798">
    <property type="entry name" value="Ribosomal_uS7_dom"/>
</dbReference>
<dbReference type="InterPro" id="IPR036823">
    <property type="entry name" value="Ribosomal_uS7_dom_sf"/>
</dbReference>
<dbReference type="NCBIfam" id="TIGR01029">
    <property type="entry name" value="rpsG_bact"/>
    <property type="match status" value="1"/>
</dbReference>
<dbReference type="PANTHER" id="PTHR11205">
    <property type="entry name" value="RIBOSOMAL PROTEIN S7"/>
    <property type="match status" value="1"/>
</dbReference>
<dbReference type="Pfam" id="PF00177">
    <property type="entry name" value="Ribosomal_S7"/>
    <property type="match status" value="1"/>
</dbReference>
<dbReference type="PIRSF" id="PIRSF002122">
    <property type="entry name" value="RPS7p_RPS7a_RPS5e_RPS7o"/>
    <property type="match status" value="1"/>
</dbReference>
<dbReference type="SUPFAM" id="SSF47973">
    <property type="entry name" value="Ribosomal protein S7"/>
    <property type="match status" value="1"/>
</dbReference>
<dbReference type="PROSITE" id="PS00052">
    <property type="entry name" value="RIBOSOMAL_S7"/>
    <property type="match status" value="1"/>
</dbReference>
<proteinExistence type="inferred from homology"/>